<reference key="1">
    <citation type="journal article" date="2005" name="Genome Res.">
        <title>Complete genome sequence of the hyperthermophilic archaeon Thermococcus kodakaraensis KOD1 and comparison with Pyrococcus genomes.</title>
        <authorList>
            <person name="Fukui T."/>
            <person name="Atomi H."/>
            <person name="Kanai T."/>
            <person name="Matsumi R."/>
            <person name="Fujiwara S."/>
            <person name="Imanaka T."/>
        </authorList>
    </citation>
    <scope>NUCLEOTIDE SEQUENCE [LARGE SCALE GENOMIC DNA]</scope>
    <source>
        <strain>ATCC BAA-918 / JCM 12380 / KOD1</strain>
    </source>
</reference>
<reference evidence="4 5 6" key="2">
    <citation type="journal article" date="2020" name="Nature">
        <title>Dynamic RNA acetylation revealed by quantitative cross-evolutionary mapping.</title>
        <authorList>
            <person name="Sas-Chen A."/>
            <person name="Thomas J.M."/>
            <person name="Matzov D."/>
            <person name="Taoka M."/>
            <person name="Nance K.D."/>
            <person name="Nir R."/>
            <person name="Bryson K.M."/>
            <person name="Shachar R."/>
            <person name="Liman G.L.S."/>
            <person name="Burkhart B.W."/>
            <person name="Gamage S.T."/>
            <person name="Nobe Y."/>
            <person name="Briney C.A."/>
            <person name="Levy M.J."/>
            <person name="Fuchs R.T."/>
            <person name="Robb G.B."/>
            <person name="Hartmann J."/>
            <person name="Sharma S."/>
            <person name="Lin Q."/>
            <person name="Florens L."/>
            <person name="Washburn M.P."/>
            <person name="Isobe T."/>
            <person name="Santangelo T.J."/>
            <person name="Shalev-Benami M."/>
            <person name="Meier J.L."/>
            <person name="Schwartz S."/>
        </authorList>
    </citation>
    <scope>STRUCTURE BY ELECTRON MICROSCOPY (2.55 ANGSTROMS) IN 70S RIBOSOME IN COMPLEX WITH ZN(2+)</scope>
    <scope>SUBUNIT</scope>
    <source>
        <strain>ATCC BAA-918 / TS559</strain>
    </source>
</reference>
<name>RS14Z_THEKO</name>
<organism>
    <name type="scientific">Thermococcus kodakarensis (strain ATCC BAA-918 / JCM 12380 / KOD1)</name>
    <name type="common">Pyrococcus kodakaraensis (strain KOD1)</name>
    <dbReference type="NCBI Taxonomy" id="69014"/>
    <lineage>
        <taxon>Archaea</taxon>
        <taxon>Methanobacteriati</taxon>
        <taxon>Methanobacteriota</taxon>
        <taxon>Thermococci</taxon>
        <taxon>Thermococcales</taxon>
        <taxon>Thermococcaceae</taxon>
        <taxon>Thermococcus</taxon>
    </lineage>
</organism>
<gene>
    <name evidence="1" type="primary">rps14</name>
    <name type="ordered locus">TK1527</name>
</gene>
<proteinExistence type="evidence at protein level"/>
<dbReference type="EMBL" id="AP006878">
    <property type="protein sequence ID" value="BAD85716.1"/>
    <property type="molecule type" value="Genomic_DNA"/>
</dbReference>
<dbReference type="RefSeq" id="WP_011250478.1">
    <property type="nucleotide sequence ID" value="NC_006624.1"/>
</dbReference>
<dbReference type="PDB" id="6SKF">
    <property type="method" value="EM"/>
    <property type="resolution" value="2.95 A"/>
    <property type="chains" value="Ar=1-56"/>
</dbReference>
<dbReference type="PDB" id="6SKG">
    <property type="method" value="EM"/>
    <property type="resolution" value="2.65 A"/>
    <property type="chains" value="Ar=1-56"/>
</dbReference>
<dbReference type="PDB" id="6TH6">
    <property type="method" value="EM"/>
    <property type="resolution" value="2.55 A"/>
    <property type="chains" value="Ar=1-56"/>
</dbReference>
<dbReference type="PDBsum" id="6SKF"/>
<dbReference type="PDBsum" id="6SKG"/>
<dbReference type="PDBsum" id="6TH6"/>
<dbReference type="EMDB" id="EMD-10223"/>
<dbReference type="EMDB" id="EMD-10224"/>
<dbReference type="EMDB" id="EMD-10503"/>
<dbReference type="SMR" id="Q5JJG2"/>
<dbReference type="FunCoup" id="Q5JJG2">
    <property type="interactions" value="128"/>
</dbReference>
<dbReference type="STRING" id="69014.TK1527"/>
<dbReference type="EnsemblBacteria" id="BAD85716">
    <property type="protein sequence ID" value="BAD85716"/>
    <property type="gene ID" value="TK1527"/>
</dbReference>
<dbReference type="GeneID" id="34861675"/>
<dbReference type="KEGG" id="tko:TK1527"/>
<dbReference type="PATRIC" id="fig|69014.16.peg.1487"/>
<dbReference type="eggNOG" id="arCOG00782">
    <property type="taxonomic scope" value="Archaea"/>
</dbReference>
<dbReference type="HOGENOM" id="CLU_177289_2_2_2"/>
<dbReference type="InParanoid" id="Q5JJG2"/>
<dbReference type="OrthoDB" id="5615at2157"/>
<dbReference type="PhylomeDB" id="Q5JJG2"/>
<dbReference type="Proteomes" id="UP000000536">
    <property type="component" value="Chromosome"/>
</dbReference>
<dbReference type="GO" id="GO:0022627">
    <property type="term" value="C:cytosolic small ribosomal subunit"/>
    <property type="evidence" value="ECO:0000318"/>
    <property type="project" value="GO_Central"/>
</dbReference>
<dbReference type="GO" id="GO:0019843">
    <property type="term" value="F:rRNA binding"/>
    <property type="evidence" value="ECO:0007669"/>
    <property type="project" value="UniProtKB-UniRule"/>
</dbReference>
<dbReference type="GO" id="GO:0003735">
    <property type="term" value="F:structural constituent of ribosome"/>
    <property type="evidence" value="ECO:0000318"/>
    <property type="project" value="GO_Central"/>
</dbReference>
<dbReference type="GO" id="GO:0008270">
    <property type="term" value="F:zinc ion binding"/>
    <property type="evidence" value="ECO:0000318"/>
    <property type="project" value="GO_Central"/>
</dbReference>
<dbReference type="GO" id="GO:0002181">
    <property type="term" value="P:cytoplasmic translation"/>
    <property type="evidence" value="ECO:0000318"/>
    <property type="project" value="GO_Central"/>
</dbReference>
<dbReference type="FunFam" id="4.10.830.10:FF:000002">
    <property type="entry name" value="40S ribosomal protein S29"/>
    <property type="match status" value="1"/>
</dbReference>
<dbReference type="Gene3D" id="4.10.830.10">
    <property type="entry name" value="30s Ribosomal Protein S14, Chain N"/>
    <property type="match status" value="1"/>
</dbReference>
<dbReference type="HAMAP" id="MF_01364_A">
    <property type="entry name" value="Ribosomal_uS14_2_A"/>
    <property type="match status" value="1"/>
</dbReference>
<dbReference type="InterPro" id="IPR001209">
    <property type="entry name" value="Ribosomal_uS14"/>
</dbReference>
<dbReference type="InterPro" id="IPR023676">
    <property type="entry name" value="Ribosomal_uS14_arc"/>
</dbReference>
<dbReference type="InterPro" id="IPR018271">
    <property type="entry name" value="Ribosomal_uS14_CS"/>
</dbReference>
<dbReference type="InterPro" id="IPR039744">
    <property type="entry name" value="RIbosomal_uS14_euk_arc"/>
</dbReference>
<dbReference type="InterPro" id="IPR043140">
    <property type="entry name" value="Ribosomal_uS14_sf"/>
</dbReference>
<dbReference type="NCBIfam" id="NF004424">
    <property type="entry name" value="PRK05766.1"/>
    <property type="match status" value="1"/>
</dbReference>
<dbReference type="PANTHER" id="PTHR12010">
    <property type="entry name" value="40S RIBOSOMAL PROTEIN S29"/>
    <property type="match status" value="1"/>
</dbReference>
<dbReference type="PANTHER" id="PTHR12010:SF2">
    <property type="entry name" value="40S RIBOSOMAL PROTEIN S29"/>
    <property type="match status" value="1"/>
</dbReference>
<dbReference type="Pfam" id="PF00253">
    <property type="entry name" value="Ribosomal_S14"/>
    <property type="match status" value="1"/>
</dbReference>
<dbReference type="PROSITE" id="PS00527">
    <property type="entry name" value="RIBOSOMAL_S14"/>
    <property type="match status" value="1"/>
</dbReference>
<keyword id="KW-0002">3D-structure</keyword>
<keyword id="KW-0479">Metal-binding</keyword>
<keyword id="KW-1185">Reference proteome</keyword>
<keyword id="KW-0687">Ribonucleoprotein</keyword>
<keyword id="KW-0689">Ribosomal protein</keyword>
<keyword id="KW-0694">RNA-binding</keyword>
<keyword id="KW-0699">rRNA-binding</keyword>
<keyword id="KW-0862">Zinc</keyword>
<evidence type="ECO:0000255" key="1">
    <source>
        <dbReference type="HAMAP-Rule" id="MF_01364"/>
    </source>
</evidence>
<evidence type="ECO:0000269" key="2">
    <source>
    </source>
</evidence>
<evidence type="ECO:0000305" key="3"/>
<evidence type="ECO:0007744" key="4">
    <source>
        <dbReference type="PDB" id="6SKF"/>
    </source>
</evidence>
<evidence type="ECO:0007744" key="5">
    <source>
        <dbReference type="PDB" id="6SKG"/>
    </source>
</evidence>
<evidence type="ECO:0007744" key="6">
    <source>
        <dbReference type="PDB" id="6TH6"/>
    </source>
</evidence>
<feature type="chain" id="PRO_0000269172" description="Small ribosomal subunit protein uS14">
    <location>
        <begin position="1"/>
        <end position="56"/>
    </location>
</feature>
<feature type="binding site" evidence="1 4">
    <location>
        <position position="21"/>
    </location>
    <ligand>
        <name>Zn(2+)</name>
        <dbReference type="ChEBI" id="CHEBI:29105"/>
    </ligand>
</feature>
<feature type="binding site" evidence="1 4 5 6">
    <location>
        <position position="24"/>
    </location>
    <ligand>
        <name>Zn(2+)</name>
        <dbReference type="ChEBI" id="CHEBI:29105"/>
    </ligand>
</feature>
<feature type="binding site" evidence="1 4 5 6">
    <location>
        <position position="39"/>
    </location>
    <ligand>
        <name>Zn(2+)</name>
        <dbReference type="ChEBI" id="CHEBI:29105"/>
    </ligand>
</feature>
<feature type="binding site" evidence="1 4 5 6">
    <location>
        <position position="42"/>
    </location>
    <ligand>
        <name>Zn(2+)</name>
        <dbReference type="ChEBI" id="CHEBI:29105"/>
    </ligand>
</feature>
<accession>Q5JJG2</accession>
<comment type="function">
    <text evidence="1">Binds 16S rRNA, required for the assembly of 30S particles.</text>
</comment>
<comment type="cofactor">
    <cofactor evidence="1 4 5 6">
        <name>Zn(2+)</name>
        <dbReference type="ChEBI" id="CHEBI:29105"/>
    </cofactor>
    <text evidence="1 4 5 6">Binds 1 zinc ion per subunit.</text>
</comment>
<comment type="subunit">
    <text evidence="1 2">Part of the 30S ribosomal subunit.</text>
</comment>
<comment type="similarity">
    <text evidence="1">Belongs to the universal ribosomal protein uS14 family. Zinc-binding uS14 subfamily.</text>
</comment>
<sequence length="56" mass="6616">MAKADYNKRKPRKFGKGARRCMRCGQYGPIIRIHGLMLCRHCFREVAPKLGFKKYE</sequence>
<protein>
    <recommendedName>
        <fullName evidence="1">Small ribosomal subunit protein uS14</fullName>
    </recommendedName>
    <alternativeName>
        <fullName evidence="3">30S ribosomal protein S14 type Z</fullName>
    </alternativeName>
</protein>